<protein>
    <recommendedName>
        <fullName evidence="2">D-alanine--D-alanine ligase</fullName>
        <ecNumber evidence="2">6.3.2.4</ecNumber>
    </recommendedName>
    <alternativeName>
        <fullName evidence="2">D-Ala-D-Ala ligase</fullName>
    </alternativeName>
    <alternativeName>
        <fullName evidence="2">D-alanylalanine synthetase</fullName>
    </alternativeName>
</protein>
<keyword id="KW-0067">ATP-binding</keyword>
<keyword id="KW-0133">Cell shape</keyword>
<keyword id="KW-0961">Cell wall biogenesis/degradation</keyword>
<keyword id="KW-0963">Cytoplasm</keyword>
<keyword id="KW-0436">Ligase</keyword>
<keyword id="KW-0460">Magnesium</keyword>
<keyword id="KW-0464">Manganese</keyword>
<keyword id="KW-0479">Metal-binding</keyword>
<keyword id="KW-0547">Nucleotide-binding</keyword>
<keyword id="KW-0573">Peptidoglycan synthesis</keyword>
<reference key="1">
    <citation type="journal article" date="2008" name="Mol. Biol. Evol.">
        <title>Genome evolution of Wolbachia strain wPip from the Culex pipiens group.</title>
        <authorList>
            <person name="Klasson L."/>
            <person name="Walker T."/>
            <person name="Sebaihia M."/>
            <person name="Sanders M.J."/>
            <person name="Quail M.A."/>
            <person name="Lord A."/>
            <person name="Sanders S."/>
            <person name="Earl J."/>
            <person name="O'Neill S.L."/>
            <person name="Thomson N."/>
            <person name="Sinkins S.P."/>
            <person name="Parkhill J."/>
        </authorList>
    </citation>
    <scope>NUCLEOTIDE SEQUENCE [LARGE SCALE GENOMIC DNA]</scope>
    <source>
        <strain>wPip</strain>
    </source>
</reference>
<evidence type="ECO:0000250" key="1"/>
<evidence type="ECO:0000255" key="2">
    <source>
        <dbReference type="HAMAP-Rule" id="MF_00047"/>
    </source>
</evidence>
<accession>B3CPK8</accession>
<organism>
    <name type="scientific">Wolbachia pipientis subsp. Culex pipiens (strain wPip)</name>
    <dbReference type="NCBI Taxonomy" id="570417"/>
    <lineage>
        <taxon>Bacteria</taxon>
        <taxon>Pseudomonadati</taxon>
        <taxon>Pseudomonadota</taxon>
        <taxon>Alphaproteobacteria</taxon>
        <taxon>Rickettsiales</taxon>
        <taxon>Anaplasmataceae</taxon>
        <taxon>Wolbachieae</taxon>
        <taxon>Wolbachia</taxon>
    </lineage>
</organism>
<comment type="function">
    <text evidence="2">Cell wall formation.</text>
</comment>
<comment type="catalytic activity">
    <reaction evidence="2">
        <text>2 D-alanine + ATP = D-alanyl-D-alanine + ADP + phosphate + H(+)</text>
        <dbReference type="Rhea" id="RHEA:11224"/>
        <dbReference type="ChEBI" id="CHEBI:15378"/>
        <dbReference type="ChEBI" id="CHEBI:30616"/>
        <dbReference type="ChEBI" id="CHEBI:43474"/>
        <dbReference type="ChEBI" id="CHEBI:57416"/>
        <dbReference type="ChEBI" id="CHEBI:57822"/>
        <dbReference type="ChEBI" id="CHEBI:456216"/>
        <dbReference type="EC" id="6.3.2.4"/>
    </reaction>
</comment>
<comment type="cofactor">
    <cofactor evidence="1">
        <name>Mg(2+)</name>
        <dbReference type="ChEBI" id="CHEBI:18420"/>
    </cofactor>
    <cofactor evidence="1">
        <name>Mn(2+)</name>
        <dbReference type="ChEBI" id="CHEBI:29035"/>
    </cofactor>
    <text evidence="1">Binds 2 magnesium or manganese ions per subunit.</text>
</comment>
<comment type="pathway">
    <text evidence="2">Cell wall biogenesis; peptidoglycan biosynthesis.</text>
</comment>
<comment type="subcellular location">
    <subcellularLocation>
        <location evidence="2">Cytoplasm</location>
    </subcellularLocation>
</comment>
<comment type="similarity">
    <text evidence="2">Belongs to the D-alanine--D-alanine ligase family.</text>
</comment>
<feature type="chain" id="PRO_1000091215" description="D-alanine--D-alanine ligase">
    <location>
        <begin position="1"/>
        <end position="317"/>
    </location>
</feature>
<feature type="domain" description="ATP-grasp" evidence="2">
    <location>
        <begin position="103"/>
        <end position="299"/>
    </location>
</feature>
<feature type="binding site" evidence="2">
    <location>
        <begin position="130"/>
        <end position="183"/>
    </location>
    <ligand>
        <name>ATP</name>
        <dbReference type="ChEBI" id="CHEBI:30616"/>
    </ligand>
</feature>
<feature type="binding site" evidence="2">
    <location>
        <position position="251"/>
    </location>
    <ligand>
        <name>Mg(2+)</name>
        <dbReference type="ChEBI" id="CHEBI:18420"/>
        <label>1</label>
    </ligand>
</feature>
<feature type="binding site" evidence="2">
    <location>
        <position position="265"/>
    </location>
    <ligand>
        <name>Mg(2+)</name>
        <dbReference type="ChEBI" id="CHEBI:18420"/>
        <label>1</label>
    </ligand>
</feature>
<feature type="binding site" evidence="2">
    <location>
        <position position="265"/>
    </location>
    <ligand>
        <name>Mg(2+)</name>
        <dbReference type="ChEBI" id="CHEBI:18420"/>
        <label>2</label>
    </ligand>
</feature>
<feature type="binding site" evidence="2">
    <location>
        <position position="267"/>
    </location>
    <ligand>
        <name>Mg(2+)</name>
        <dbReference type="ChEBI" id="CHEBI:18420"/>
        <label>2</label>
    </ligand>
</feature>
<dbReference type="EC" id="6.3.2.4" evidence="2"/>
<dbReference type="EMBL" id="AM999887">
    <property type="protein sequence ID" value="CAQ54511.1"/>
    <property type="molecule type" value="Genomic_DNA"/>
</dbReference>
<dbReference type="RefSeq" id="WP_012481821.1">
    <property type="nucleotide sequence ID" value="NC_010981.1"/>
</dbReference>
<dbReference type="SMR" id="B3CPK8"/>
<dbReference type="KEGG" id="wpi:WP0403"/>
<dbReference type="eggNOG" id="COG1181">
    <property type="taxonomic scope" value="Bacteria"/>
</dbReference>
<dbReference type="HOGENOM" id="CLU_039268_1_1_5"/>
<dbReference type="UniPathway" id="UPA00219"/>
<dbReference type="Proteomes" id="UP000008814">
    <property type="component" value="Chromosome"/>
</dbReference>
<dbReference type="GO" id="GO:0005737">
    <property type="term" value="C:cytoplasm"/>
    <property type="evidence" value="ECO:0007669"/>
    <property type="project" value="UniProtKB-SubCell"/>
</dbReference>
<dbReference type="GO" id="GO:0005524">
    <property type="term" value="F:ATP binding"/>
    <property type="evidence" value="ECO:0007669"/>
    <property type="project" value="UniProtKB-KW"/>
</dbReference>
<dbReference type="GO" id="GO:0008716">
    <property type="term" value="F:D-alanine-D-alanine ligase activity"/>
    <property type="evidence" value="ECO:0007669"/>
    <property type="project" value="UniProtKB-UniRule"/>
</dbReference>
<dbReference type="GO" id="GO:0046872">
    <property type="term" value="F:metal ion binding"/>
    <property type="evidence" value="ECO:0007669"/>
    <property type="project" value="UniProtKB-KW"/>
</dbReference>
<dbReference type="GO" id="GO:0071555">
    <property type="term" value="P:cell wall organization"/>
    <property type="evidence" value="ECO:0007669"/>
    <property type="project" value="UniProtKB-KW"/>
</dbReference>
<dbReference type="GO" id="GO:0009252">
    <property type="term" value="P:peptidoglycan biosynthetic process"/>
    <property type="evidence" value="ECO:0007669"/>
    <property type="project" value="UniProtKB-UniRule"/>
</dbReference>
<dbReference type="GO" id="GO:0008360">
    <property type="term" value="P:regulation of cell shape"/>
    <property type="evidence" value="ECO:0007669"/>
    <property type="project" value="UniProtKB-KW"/>
</dbReference>
<dbReference type="Gene3D" id="3.40.50.20">
    <property type="match status" value="1"/>
</dbReference>
<dbReference type="Gene3D" id="3.30.1490.20">
    <property type="entry name" value="ATP-grasp fold, A domain"/>
    <property type="match status" value="1"/>
</dbReference>
<dbReference type="Gene3D" id="3.30.470.20">
    <property type="entry name" value="ATP-grasp fold, B domain"/>
    <property type="match status" value="1"/>
</dbReference>
<dbReference type="HAMAP" id="MF_00047">
    <property type="entry name" value="Dala_Dala_lig"/>
    <property type="match status" value="1"/>
</dbReference>
<dbReference type="InterPro" id="IPR011761">
    <property type="entry name" value="ATP-grasp"/>
</dbReference>
<dbReference type="InterPro" id="IPR013815">
    <property type="entry name" value="ATP_grasp_subdomain_1"/>
</dbReference>
<dbReference type="InterPro" id="IPR000291">
    <property type="entry name" value="D-Ala_lig_Van_CS"/>
</dbReference>
<dbReference type="InterPro" id="IPR005905">
    <property type="entry name" value="D_ala_D_ala"/>
</dbReference>
<dbReference type="InterPro" id="IPR011095">
    <property type="entry name" value="Dala_Dala_lig_C"/>
</dbReference>
<dbReference type="InterPro" id="IPR011127">
    <property type="entry name" value="Dala_Dala_lig_N"/>
</dbReference>
<dbReference type="InterPro" id="IPR016185">
    <property type="entry name" value="PreATP-grasp_dom_sf"/>
</dbReference>
<dbReference type="NCBIfam" id="TIGR01205">
    <property type="entry name" value="D_ala_D_alaTIGR"/>
    <property type="match status" value="1"/>
</dbReference>
<dbReference type="NCBIfam" id="NF002378">
    <property type="entry name" value="PRK01372.1"/>
    <property type="match status" value="1"/>
</dbReference>
<dbReference type="PANTHER" id="PTHR23132">
    <property type="entry name" value="D-ALANINE--D-ALANINE LIGASE"/>
    <property type="match status" value="1"/>
</dbReference>
<dbReference type="PANTHER" id="PTHR23132:SF23">
    <property type="entry name" value="D-ALANINE--D-ALANINE LIGASE B"/>
    <property type="match status" value="1"/>
</dbReference>
<dbReference type="Pfam" id="PF07478">
    <property type="entry name" value="Dala_Dala_lig_C"/>
    <property type="match status" value="1"/>
</dbReference>
<dbReference type="Pfam" id="PF01820">
    <property type="entry name" value="Dala_Dala_lig_N"/>
    <property type="match status" value="1"/>
</dbReference>
<dbReference type="PIRSF" id="PIRSF039102">
    <property type="entry name" value="Ddl/VanB"/>
    <property type="match status" value="1"/>
</dbReference>
<dbReference type="SUPFAM" id="SSF56059">
    <property type="entry name" value="Glutathione synthetase ATP-binding domain-like"/>
    <property type="match status" value="1"/>
</dbReference>
<dbReference type="SUPFAM" id="SSF52440">
    <property type="entry name" value="PreATP-grasp domain"/>
    <property type="match status" value="1"/>
</dbReference>
<dbReference type="PROSITE" id="PS50975">
    <property type="entry name" value="ATP_GRASP"/>
    <property type="match status" value="1"/>
</dbReference>
<dbReference type="PROSITE" id="PS00843">
    <property type="entry name" value="DALA_DALA_LIGASE_1"/>
    <property type="match status" value="1"/>
</dbReference>
<gene>
    <name evidence="2" type="primary">ddl</name>
    <name type="ordered locus">WP0403</name>
</gene>
<name>DDL_WOLPP</name>
<proteinExistence type="inferred from homology"/>
<sequence length="317" mass="35815">MLMVPNIAILSGGFSCEREISLMSGKAVKKALDSLSYNAIEIDVDSNIAQKLKKTNPALAFIALHGPYGEDGCIQGLLEILGIKYTHSEVMASAVAMNKVMSKHIFHSLNIDTPRGYVISREDVLKNNIKVDYPYVLKPINEGSSIGVHMIFSHEDYLELKNNSSTIMEKMIIEEYIPGIELHTAVLLNEAIGTMEIRPKNKFYDYEAKYTDGFAEHIFPAEIPNNIYRITLEHALKVHQFLGCKTVSRSDFRYNPQNNTLKMLEVNTHPGFTELSLVPEIAKLTRGIDFNELVKIIVEDSLHHRNIRDQADVEQCY</sequence>